<reference key="1">
    <citation type="journal article" date="2016" name="BMC Genomics">
        <title>Expansion and diversification of the MSDIN family of cyclic peptide genes in the poisonous agarics Amanita phalloides and A. bisporigera.</title>
        <authorList>
            <person name="Pulman J.A."/>
            <person name="Childs K.L."/>
            <person name="Sgambelluri R.M."/>
            <person name="Walton J.D."/>
        </authorList>
    </citation>
    <scope>NUCLEOTIDE SEQUENCE [LARGE SCALE GENOMIC DNA]</scope>
    <scope>FUNCTION</scope>
</reference>
<comment type="function">
    <text evidence="4">Cyclic octapeptide that belongs to the MSDIN-like toxin family responsible for a large number of food poisoning cases and deaths (PubMed:27978833). Cycloaminide E is structurally related to other cycloamanides that are non-toxic to mammals but show immunosuppressive activity (PubMed:27978833).</text>
</comment>
<comment type="PTM">
    <text evidence="1">Processed by the macrocyclase-peptidase enzyme POPB to yield a cyclic decapeptide (By similarity). POPB first removes 10 residues from the N-terminus (By similarity). Conformational trapping of the remaining peptide forces the enzyme to release this intermediate rather than proceed to macrocyclization (By similarity). The enzyme rebinds the remaining peptide in a different conformation and catalyzes macrocyclization of the N-terminal 8 residues (By similarity).</text>
</comment>
<comment type="similarity">
    <text evidence="3">Belongs to the MSDIN fungal toxin family.</text>
</comment>
<accession>P0CU62</accession>
<sequence>MSDINATRLPIVGILGLPCIGDDVNSTLTHGEDLC</sequence>
<dbReference type="SMR" id="P0CU62"/>
<dbReference type="GO" id="GO:0090729">
    <property type="term" value="F:toxin activity"/>
    <property type="evidence" value="ECO:0007669"/>
    <property type="project" value="UniProtKB-KW"/>
</dbReference>
<dbReference type="InterPro" id="IPR027582">
    <property type="entry name" value="Amanitin/phalloidin"/>
</dbReference>
<dbReference type="NCBIfam" id="TIGR04309">
    <property type="entry name" value="amanitin"/>
    <property type="match status" value="1"/>
</dbReference>
<dbReference type="Pfam" id="PF24112">
    <property type="entry name" value="Amanitin"/>
    <property type="match status" value="1"/>
</dbReference>
<proteinExistence type="inferred from homology"/>
<organism>
    <name type="scientific">Amanita phalloides</name>
    <name type="common">Death cap</name>
    <dbReference type="NCBI Taxonomy" id="67723"/>
    <lineage>
        <taxon>Eukaryota</taxon>
        <taxon>Fungi</taxon>
        <taxon>Dikarya</taxon>
        <taxon>Basidiomycota</taxon>
        <taxon>Agaricomycotina</taxon>
        <taxon>Agaricomycetes</taxon>
        <taxon>Agaricomycetidae</taxon>
        <taxon>Agaricales</taxon>
        <taxon>Pluteineae</taxon>
        <taxon>Amanitaceae</taxon>
        <taxon>Amanita</taxon>
    </lineage>
</organism>
<evidence type="ECO:0000250" key="1">
    <source>
        <dbReference type="UniProtKB" id="A0A067SLB9"/>
    </source>
</evidence>
<evidence type="ECO:0000303" key="2">
    <source>
    </source>
</evidence>
<evidence type="ECO:0000305" key="3"/>
<evidence type="ECO:0000305" key="4">
    <source>
    </source>
</evidence>
<name>CYAF_AMAPH</name>
<keyword id="KW-0800">Toxin</keyword>
<protein>
    <recommendedName>
        <fullName evidence="2">Cycloamanide F proprotein</fullName>
    </recommendedName>
    <component>
        <recommendedName>
            <fullName evidence="2">Cycloamanide F</fullName>
        </recommendedName>
    </component>
</protein>
<feature type="propeptide" id="PRO_0000443786" evidence="4">
    <location>
        <begin position="1"/>
        <end position="10"/>
    </location>
</feature>
<feature type="peptide" id="PRO_0000443787" description="Cycloamanide F" evidence="4">
    <location>
        <begin position="11"/>
        <end position="18"/>
    </location>
</feature>
<feature type="propeptide" id="PRO_0000443788" evidence="4">
    <location>
        <begin position="19"/>
        <end position="35"/>
    </location>
</feature>
<feature type="cross-link" description="Cyclopeptide (Ile-Pro)" evidence="4">
    <location>
        <begin position="11"/>
        <end position="18"/>
    </location>
</feature>